<accession>Q7KWS1</accession>
<accession>Q551W3</accession>
<name>Y9423_DICDI</name>
<feature type="chain" id="PRO_0000348193" description="Uncharacterized protein DDB_G0276289">
    <location>
        <begin position="1"/>
        <end position="163"/>
    </location>
</feature>
<gene>
    <name type="ORF">DDB_G0276289</name>
</gene>
<sequence>MGYQKVVLVAACNILNENISKNDNVLNQNNNINNINNNNYNSNDDNEKIIGNNNISTNNSNLILFNQNNNNNNNCHEERLECQVPFEYIDVYGNADFSFLKYTKRSEFRKYLKKAYNIESLFDKSFRFNSITSFPTIKYYYSLIEDDENIKKKIKEDSYLLLV</sequence>
<proteinExistence type="predicted"/>
<organism>
    <name type="scientific">Dictyostelium discoideum</name>
    <name type="common">Social amoeba</name>
    <dbReference type="NCBI Taxonomy" id="44689"/>
    <lineage>
        <taxon>Eukaryota</taxon>
        <taxon>Amoebozoa</taxon>
        <taxon>Evosea</taxon>
        <taxon>Eumycetozoa</taxon>
        <taxon>Dictyostelia</taxon>
        <taxon>Dictyosteliales</taxon>
        <taxon>Dictyosteliaceae</taxon>
        <taxon>Dictyostelium</taxon>
    </lineage>
</organism>
<dbReference type="EMBL" id="AAFI02000014">
    <property type="protein sequence ID" value="EAL69291.1"/>
    <property type="molecule type" value="Genomic_DNA"/>
</dbReference>
<dbReference type="RefSeq" id="XP_643214.1">
    <property type="nucleotide sequence ID" value="XM_638122.1"/>
</dbReference>
<dbReference type="PaxDb" id="44689-DDB0169423"/>
<dbReference type="EnsemblProtists" id="EAL69291">
    <property type="protein sequence ID" value="EAL69291"/>
    <property type="gene ID" value="DDB_G0276289"/>
</dbReference>
<dbReference type="GeneID" id="8620417"/>
<dbReference type="KEGG" id="ddi:DDB_G0276289"/>
<dbReference type="dictyBase" id="DDB_G0276289"/>
<dbReference type="VEuPathDB" id="AmoebaDB:DDB_G0276289"/>
<dbReference type="HOGENOM" id="CLU_1630085_0_0_1"/>
<dbReference type="InParanoid" id="Q7KWS1"/>
<dbReference type="PRO" id="PR:Q7KWS1"/>
<dbReference type="Proteomes" id="UP000002195">
    <property type="component" value="Chromosome 2"/>
</dbReference>
<keyword id="KW-1185">Reference proteome</keyword>
<protein>
    <recommendedName>
        <fullName>Uncharacterized protein DDB_G0276289</fullName>
    </recommendedName>
</protein>
<reference key="1">
    <citation type="journal article" date="2002" name="Nature">
        <title>Sequence and analysis of chromosome 2 of Dictyostelium discoideum.</title>
        <authorList>
            <person name="Gloeckner G."/>
            <person name="Eichinger L."/>
            <person name="Szafranski K."/>
            <person name="Pachebat J.A."/>
            <person name="Bankier A.T."/>
            <person name="Dear P.H."/>
            <person name="Lehmann R."/>
            <person name="Baumgart C."/>
            <person name="Parra G."/>
            <person name="Abril J.F."/>
            <person name="Guigo R."/>
            <person name="Kumpf K."/>
            <person name="Tunggal B."/>
            <person name="Cox E.C."/>
            <person name="Quail M.A."/>
            <person name="Platzer M."/>
            <person name="Rosenthal A."/>
            <person name="Noegel A.A."/>
        </authorList>
    </citation>
    <scope>NUCLEOTIDE SEQUENCE [LARGE SCALE GENOMIC DNA]</scope>
    <source>
        <strain>AX4</strain>
    </source>
</reference>
<reference key="2">
    <citation type="journal article" date="2005" name="Nature">
        <title>The genome of the social amoeba Dictyostelium discoideum.</title>
        <authorList>
            <person name="Eichinger L."/>
            <person name="Pachebat J.A."/>
            <person name="Gloeckner G."/>
            <person name="Rajandream M.A."/>
            <person name="Sucgang R."/>
            <person name="Berriman M."/>
            <person name="Song J."/>
            <person name="Olsen R."/>
            <person name="Szafranski K."/>
            <person name="Xu Q."/>
            <person name="Tunggal B."/>
            <person name="Kummerfeld S."/>
            <person name="Madera M."/>
            <person name="Konfortov B.A."/>
            <person name="Rivero F."/>
            <person name="Bankier A.T."/>
            <person name="Lehmann R."/>
            <person name="Hamlin N."/>
            <person name="Davies R."/>
            <person name="Gaudet P."/>
            <person name="Fey P."/>
            <person name="Pilcher K."/>
            <person name="Chen G."/>
            <person name="Saunders D."/>
            <person name="Sodergren E.J."/>
            <person name="Davis P."/>
            <person name="Kerhornou A."/>
            <person name="Nie X."/>
            <person name="Hall N."/>
            <person name="Anjard C."/>
            <person name="Hemphill L."/>
            <person name="Bason N."/>
            <person name="Farbrother P."/>
            <person name="Desany B."/>
            <person name="Just E."/>
            <person name="Morio T."/>
            <person name="Rost R."/>
            <person name="Churcher C.M."/>
            <person name="Cooper J."/>
            <person name="Haydock S."/>
            <person name="van Driessche N."/>
            <person name="Cronin A."/>
            <person name="Goodhead I."/>
            <person name="Muzny D.M."/>
            <person name="Mourier T."/>
            <person name="Pain A."/>
            <person name="Lu M."/>
            <person name="Harper D."/>
            <person name="Lindsay R."/>
            <person name="Hauser H."/>
            <person name="James K.D."/>
            <person name="Quiles M."/>
            <person name="Madan Babu M."/>
            <person name="Saito T."/>
            <person name="Buchrieser C."/>
            <person name="Wardroper A."/>
            <person name="Felder M."/>
            <person name="Thangavelu M."/>
            <person name="Johnson D."/>
            <person name="Knights A."/>
            <person name="Loulseged H."/>
            <person name="Mungall K.L."/>
            <person name="Oliver K."/>
            <person name="Price C."/>
            <person name="Quail M.A."/>
            <person name="Urushihara H."/>
            <person name="Hernandez J."/>
            <person name="Rabbinowitsch E."/>
            <person name="Steffen D."/>
            <person name="Sanders M."/>
            <person name="Ma J."/>
            <person name="Kohara Y."/>
            <person name="Sharp S."/>
            <person name="Simmonds M.N."/>
            <person name="Spiegler S."/>
            <person name="Tivey A."/>
            <person name="Sugano S."/>
            <person name="White B."/>
            <person name="Walker D."/>
            <person name="Woodward J.R."/>
            <person name="Winckler T."/>
            <person name="Tanaka Y."/>
            <person name="Shaulsky G."/>
            <person name="Schleicher M."/>
            <person name="Weinstock G.M."/>
            <person name="Rosenthal A."/>
            <person name="Cox E.C."/>
            <person name="Chisholm R.L."/>
            <person name="Gibbs R.A."/>
            <person name="Loomis W.F."/>
            <person name="Platzer M."/>
            <person name="Kay R.R."/>
            <person name="Williams J.G."/>
            <person name="Dear P.H."/>
            <person name="Noegel A.A."/>
            <person name="Barrell B.G."/>
            <person name="Kuspa A."/>
        </authorList>
    </citation>
    <scope>NUCLEOTIDE SEQUENCE [LARGE SCALE GENOMIC DNA]</scope>
    <source>
        <strain>AX4</strain>
    </source>
</reference>